<protein>
    <recommendedName>
        <fullName evidence="1">Putative glutamate--cysteine ligase 2</fullName>
        <ecNumber evidence="1">6.3.2.2</ecNumber>
    </recommendedName>
    <alternativeName>
        <fullName evidence="1">Gamma-glutamylcysteine synthetase 2</fullName>
        <shortName evidence="1">GCS 2</shortName>
        <shortName evidence="1">Gamma-GCS 2</shortName>
    </alternativeName>
</protein>
<name>GCS2_ECO5E</name>
<accession>B5YPS4</accession>
<organism>
    <name type="scientific">Escherichia coli O157:H7 (strain EC4115 / EHEC)</name>
    <dbReference type="NCBI Taxonomy" id="444450"/>
    <lineage>
        <taxon>Bacteria</taxon>
        <taxon>Pseudomonadati</taxon>
        <taxon>Pseudomonadota</taxon>
        <taxon>Gammaproteobacteria</taxon>
        <taxon>Enterobacterales</taxon>
        <taxon>Enterobacteriaceae</taxon>
        <taxon>Escherichia</taxon>
    </lineage>
</organism>
<proteinExistence type="inferred from homology"/>
<reference key="1">
    <citation type="journal article" date="2011" name="Proc. Natl. Acad. Sci. U.S.A.">
        <title>Genomic anatomy of Escherichia coli O157:H7 outbreaks.</title>
        <authorList>
            <person name="Eppinger M."/>
            <person name="Mammel M.K."/>
            <person name="Leclerc J.E."/>
            <person name="Ravel J."/>
            <person name="Cebula T.A."/>
        </authorList>
    </citation>
    <scope>NUCLEOTIDE SEQUENCE [LARGE SCALE GENOMIC DNA]</scope>
    <source>
        <strain>EC4115 / EHEC</strain>
    </source>
</reference>
<feature type="chain" id="PRO_1000189574" description="Putative glutamate--cysteine ligase 2">
    <location>
        <begin position="1"/>
        <end position="372"/>
    </location>
</feature>
<gene>
    <name type="primary">ybdK</name>
    <name type="ordered locus">ECH74115_0662</name>
</gene>
<keyword id="KW-0067">ATP-binding</keyword>
<keyword id="KW-0436">Ligase</keyword>
<keyword id="KW-0547">Nucleotide-binding</keyword>
<sequence>MPLPDFHVSEPFTLGIELEMQVVNPPGYDLSQDSSMLIDAVKNKITAGEVKHDITESMLELATDVCRDINQAAGQFSAMQKVVLQAAADHHLEICGGGTHPFQKWQRQEVCDNERYQRTLENFGYLIQQATVFGQHVHVGCASGDDAIYLLHGLSRFVPHFIALSAASPYMQGTDTRFASSRPNIFSAFPDNGPMPWVSNWQQFEALFRCLSYTTMIDSIKDLHWDIRPSPHFGTVEVRVMDTPLTLSHAVNMAGLIQATAHWLLTERPFKHKEKDYLLYKFNRFQACRYGLEGVITDPYTGDRRPLTEDTLRLLEKIAPSAHKIGASSAIEALHRQVVSGLNEAQLMRDFVADGGSLIGLVKKHCEIWAGD</sequence>
<dbReference type="EC" id="6.3.2.2" evidence="1"/>
<dbReference type="EMBL" id="CP001164">
    <property type="protein sequence ID" value="ACI39823.1"/>
    <property type="molecule type" value="Genomic_DNA"/>
</dbReference>
<dbReference type="RefSeq" id="WP_001130633.1">
    <property type="nucleotide sequence ID" value="NC_011353.1"/>
</dbReference>
<dbReference type="SMR" id="B5YPS4"/>
<dbReference type="KEGG" id="ecf:ECH74115_0662"/>
<dbReference type="HOGENOM" id="CLU_044848_1_1_6"/>
<dbReference type="GO" id="GO:0005524">
    <property type="term" value="F:ATP binding"/>
    <property type="evidence" value="ECO:0007669"/>
    <property type="project" value="UniProtKB-KW"/>
</dbReference>
<dbReference type="GO" id="GO:0004357">
    <property type="term" value="F:glutamate-cysteine ligase activity"/>
    <property type="evidence" value="ECO:0007669"/>
    <property type="project" value="UniProtKB-EC"/>
</dbReference>
<dbReference type="GO" id="GO:0042398">
    <property type="term" value="P:modified amino acid biosynthetic process"/>
    <property type="evidence" value="ECO:0007669"/>
    <property type="project" value="InterPro"/>
</dbReference>
<dbReference type="FunFam" id="3.30.590.20:FF:000002">
    <property type="entry name" value="Putative glutamate--cysteine ligase 2"/>
    <property type="match status" value="1"/>
</dbReference>
<dbReference type="Gene3D" id="3.30.590.20">
    <property type="match status" value="1"/>
</dbReference>
<dbReference type="HAMAP" id="MF_01609">
    <property type="entry name" value="Glu_cys_ligase_2"/>
    <property type="match status" value="1"/>
</dbReference>
<dbReference type="InterPro" id="IPR050141">
    <property type="entry name" value="GCL_type2/YbdK_subfam"/>
</dbReference>
<dbReference type="InterPro" id="IPR006336">
    <property type="entry name" value="GCS2"/>
</dbReference>
<dbReference type="InterPro" id="IPR014746">
    <property type="entry name" value="Gln_synth/guanido_kin_cat_dom"/>
</dbReference>
<dbReference type="InterPro" id="IPR011793">
    <property type="entry name" value="YbdK"/>
</dbReference>
<dbReference type="NCBIfam" id="TIGR02050">
    <property type="entry name" value="gshA_cyan_rel"/>
    <property type="match status" value="1"/>
</dbReference>
<dbReference type="NCBIfam" id="NF010040">
    <property type="entry name" value="PRK13516.1"/>
    <property type="match status" value="1"/>
</dbReference>
<dbReference type="PANTHER" id="PTHR36510">
    <property type="entry name" value="GLUTAMATE--CYSTEINE LIGASE 2-RELATED"/>
    <property type="match status" value="1"/>
</dbReference>
<dbReference type="PANTHER" id="PTHR36510:SF1">
    <property type="entry name" value="GLUTAMATE--CYSTEINE LIGASE 2-RELATED"/>
    <property type="match status" value="1"/>
</dbReference>
<dbReference type="Pfam" id="PF04107">
    <property type="entry name" value="GCS2"/>
    <property type="match status" value="1"/>
</dbReference>
<dbReference type="SUPFAM" id="SSF55931">
    <property type="entry name" value="Glutamine synthetase/guanido kinase"/>
    <property type="match status" value="1"/>
</dbReference>
<evidence type="ECO:0000255" key="1">
    <source>
        <dbReference type="HAMAP-Rule" id="MF_01609"/>
    </source>
</evidence>
<comment type="function">
    <text evidence="1">ATP-dependent carboxylate-amine ligase which exhibits weak glutamate--cysteine ligase activity.</text>
</comment>
<comment type="catalytic activity">
    <reaction evidence="1">
        <text>L-cysteine + L-glutamate + ATP = gamma-L-glutamyl-L-cysteine + ADP + phosphate + H(+)</text>
        <dbReference type="Rhea" id="RHEA:13285"/>
        <dbReference type="ChEBI" id="CHEBI:15378"/>
        <dbReference type="ChEBI" id="CHEBI:29985"/>
        <dbReference type="ChEBI" id="CHEBI:30616"/>
        <dbReference type="ChEBI" id="CHEBI:35235"/>
        <dbReference type="ChEBI" id="CHEBI:43474"/>
        <dbReference type="ChEBI" id="CHEBI:58173"/>
        <dbReference type="ChEBI" id="CHEBI:456216"/>
        <dbReference type="EC" id="6.3.2.2"/>
    </reaction>
</comment>
<comment type="subunit">
    <text evidence="1">Homodimer.</text>
</comment>
<comment type="similarity">
    <text evidence="1">Belongs to the glutamate--cysteine ligase type 2 family. YbdK subfamily.</text>
</comment>